<gene>
    <name evidence="1" type="primary">grpE</name>
    <name type="ordered locus">Cpar_1574</name>
</gene>
<proteinExistence type="inferred from homology"/>
<dbReference type="EMBL" id="CP001099">
    <property type="protein sequence ID" value="ACF11972.1"/>
    <property type="molecule type" value="Genomic_DNA"/>
</dbReference>
<dbReference type="RefSeq" id="WP_012502805.1">
    <property type="nucleotide sequence ID" value="NC_011027.1"/>
</dbReference>
<dbReference type="SMR" id="B3QPW9"/>
<dbReference type="STRING" id="517417.Cpar_1574"/>
<dbReference type="KEGG" id="cpc:Cpar_1574"/>
<dbReference type="eggNOG" id="COG0576">
    <property type="taxonomic scope" value="Bacteria"/>
</dbReference>
<dbReference type="HOGENOM" id="CLU_057217_5_2_10"/>
<dbReference type="OrthoDB" id="9812586at2"/>
<dbReference type="Proteomes" id="UP000008811">
    <property type="component" value="Chromosome"/>
</dbReference>
<dbReference type="GO" id="GO:0005737">
    <property type="term" value="C:cytoplasm"/>
    <property type="evidence" value="ECO:0007669"/>
    <property type="project" value="UniProtKB-SubCell"/>
</dbReference>
<dbReference type="GO" id="GO:0000774">
    <property type="term" value="F:adenyl-nucleotide exchange factor activity"/>
    <property type="evidence" value="ECO:0007669"/>
    <property type="project" value="InterPro"/>
</dbReference>
<dbReference type="GO" id="GO:0042803">
    <property type="term" value="F:protein homodimerization activity"/>
    <property type="evidence" value="ECO:0007669"/>
    <property type="project" value="InterPro"/>
</dbReference>
<dbReference type="GO" id="GO:0051087">
    <property type="term" value="F:protein-folding chaperone binding"/>
    <property type="evidence" value="ECO:0007669"/>
    <property type="project" value="InterPro"/>
</dbReference>
<dbReference type="GO" id="GO:0051082">
    <property type="term" value="F:unfolded protein binding"/>
    <property type="evidence" value="ECO:0007669"/>
    <property type="project" value="TreeGrafter"/>
</dbReference>
<dbReference type="GO" id="GO:0006457">
    <property type="term" value="P:protein folding"/>
    <property type="evidence" value="ECO:0007669"/>
    <property type="project" value="InterPro"/>
</dbReference>
<dbReference type="CDD" id="cd00446">
    <property type="entry name" value="GrpE"/>
    <property type="match status" value="1"/>
</dbReference>
<dbReference type="FunFam" id="2.30.22.10:FF:000001">
    <property type="entry name" value="Protein GrpE"/>
    <property type="match status" value="1"/>
</dbReference>
<dbReference type="Gene3D" id="3.90.20.20">
    <property type="match status" value="1"/>
</dbReference>
<dbReference type="Gene3D" id="2.30.22.10">
    <property type="entry name" value="Head domain of nucleotide exchange factor GrpE"/>
    <property type="match status" value="1"/>
</dbReference>
<dbReference type="HAMAP" id="MF_01151">
    <property type="entry name" value="GrpE"/>
    <property type="match status" value="1"/>
</dbReference>
<dbReference type="InterPro" id="IPR000740">
    <property type="entry name" value="GrpE"/>
</dbReference>
<dbReference type="InterPro" id="IPR013805">
    <property type="entry name" value="GrpE_coiled_coil"/>
</dbReference>
<dbReference type="InterPro" id="IPR009012">
    <property type="entry name" value="GrpE_head"/>
</dbReference>
<dbReference type="PANTHER" id="PTHR21237">
    <property type="entry name" value="GRPE PROTEIN"/>
    <property type="match status" value="1"/>
</dbReference>
<dbReference type="PANTHER" id="PTHR21237:SF23">
    <property type="entry name" value="GRPE PROTEIN HOMOLOG, MITOCHONDRIAL"/>
    <property type="match status" value="1"/>
</dbReference>
<dbReference type="Pfam" id="PF01025">
    <property type="entry name" value="GrpE"/>
    <property type="match status" value="1"/>
</dbReference>
<dbReference type="PRINTS" id="PR00773">
    <property type="entry name" value="GRPEPROTEIN"/>
</dbReference>
<dbReference type="SUPFAM" id="SSF58014">
    <property type="entry name" value="Coiled-coil domain of nucleotide exchange factor GrpE"/>
    <property type="match status" value="1"/>
</dbReference>
<dbReference type="SUPFAM" id="SSF51064">
    <property type="entry name" value="Head domain of nucleotide exchange factor GrpE"/>
    <property type="match status" value="1"/>
</dbReference>
<dbReference type="PROSITE" id="PS01071">
    <property type="entry name" value="GRPE"/>
    <property type="match status" value="1"/>
</dbReference>
<evidence type="ECO:0000255" key="1">
    <source>
        <dbReference type="HAMAP-Rule" id="MF_01151"/>
    </source>
</evidence>
<evidence type="ECO:0000256" key="2">
    <source>
        <dbReference type="SAM" id="MobiDB-lite"/>
    </source>
</evidence>
<keyword id="KW-0143">Chaperone</keyword>
<keyword id="KW-0963">Cytoplasm</keyword>
<keyword id="KW-0346">Stress response</keyword>
<organism>
    <name type="scientific">Chlorobaculum parvum (strain DSM 263 / NCIMB 8327)</name>
    <name type="common">Chlorobium vibrioforme subsp. thiosulfatophilum</name>
    <dbReference type="NCBI Taxonomy" id="517417"/>
    <lineage>
        <taxon>Bacteria</taxon>
        <taxon>Pseudomonadati</taxon>
        <taxon>Chlorobiota</taxon>
        <taxon>Chlorobiia</taxon>
        <taxon>Chlorobiales</taxon>
        <taxon>Chlorobiaceae</taxon>
        <taxon>Chlorobaculum</taxon>
    </lineage>
</organism>
<comment type="function">
    <text evidence="1">Participates actively in the response to hyperosmotic and heat shock by preventing the aggregation of stress-denatured proteins, in association with DnaK and GrpE. It is the nucleotide exchange factor for DnaK and may function as a thermosensor. Unfolded proteins bind initially to DnaJ; upon interaction with the DnaJ-bound protein, DnaK hydrolyzes its bound ATP, resulting in the formation of a stable complex. GrpE releases ADP from DnaK; ATP binding to DnaK triggers the release of the substrate protein, thus completing the reaction cycle. Several rounds of ATP-dependent interactions between DnaJ, DnaK and GrpE are required for fully efficient folding.</text>
</comment>
<comment type="subunit">
    <text evidence="1">Homodimer.</text>
</comment>
<comment type="subcellular location">
    <subcellularLocation>
        <location evidence="1">Cytoplasm</location>
    </subcellularLocation>
</comment>
<comment type="similarity">
    <text evidence="1">Belongs to the GrpE family.</text>
</comment>
<sequence>MTKKHHKEQEEIQETIKTEAAEENVGDETVAIPAATESDIEAEIAARDAEIQKLRDEVMRRAAEFENFRKQKEREAAQSGKRMLENTVRDLLPLLDDLKRLMEHIPAELQEMAEAKPFVEGVELIRKNFKSLLESKGVKEIEALGKVLDVNFHEAITQIDVPDTEPDTIVQEYQTGYTLGDRVIRHAKVIVAK</sequence>
<accession>B3QPW9</accession>
<feature type="chain" id="PRO_1000137553" description="Protein GrpE">
    <location>
        <begin position="1"/>
        <end position="193"/>
    </location>
</feature>
<feature type="region of interest" description="Disordered" evidence="2">
    <location>
        <begin position="1"/>
        <end position="26"/>
    </location>
</feature>
<feature type="compositionally biased region" description="Basic and acidic residues" evidence="2">
    <location>
        <begin position="7"/>
        <end position="20"/>
    </location>
</feature>
<protein>
    <recommendedName>
        <fullName evidence="1">Protein GrpE</fullName>
    </recommendedName>
    <alternativeName>
        <fullName evidence="1">HSP-70 cofactor</fullName>
    </alternativeName>
</protein>
<name>GRPE_CHLP8</name>
<reference key="1">
    <citation type="submission" date="2008-06" db="EMBL/GenBank/DDBJ databases">
        <title>Complete sequence of Chlorobaculum parvum NCIB 8327.</title>
        <authorList>
            <consortium name="US DOE Joint Genome Institute"/>
            <person name="Lucas S."/>
            <person name="Copeland A."/>
            <person name="Lapidus A."/>
            <person name="Glavina del Rio T."/>
            <person name="Dalin E."/>
            <person name="Tice H."/>
            <person name="Bruce D."/>
            <person name="Goodwin L."/>
            <person name="Pitluck S."/>
            <person name="Schmutz J."/>
            <person name="Larimer F."/>
            <person name="Land M."/>
            <person name="Hauser L."/>
            <person name="Kyrpides N."/>
            <person name="Mikhailova N."/>
            <person name="Zhao F."/>
            <person name="Li T."/>
            <person name="Liu Z."/>
            <person name="Overmann J."/>
            <person name="Bryant D.A."/>
            <person name="Richardson P."/>
        </authorList>
    </citation>
    <scope>NUCLEOTIDE SEQUENCE [LARGE SCALE GENOMIC DNA]</scope>
    <source>
        <strain>DSM 263 / NCIMB 8327</strain>
    </source>
</reference>